<organism>
    <name type="scientific">Methanosarcina acetivorans (strain ATCC 35395 / DSM 2834 / JCM 12185 / C2A)</name>
    <dbReference type="NCBI Taxonomy" id="188937"/>
    <lineage>
        <taxon>Archaea</taxon>
        <taxon>Methanobacteriati</taxon>
        <taxon>Methanobacteriota</taxon>
        <taxon>Stenosarchaea group</taxon>
        <taxon>Methanomicrobia</taxon>
        <taxon>Methanosarcinales</taxon>
        <taxon>Methanosarcinaceae</taxon>
        <taxon>Methanosarcina</taxon>
    </lineage>
</organism>
<dbReference type="EC" id="7.1.2.2" evidence="1"/>
<dbReference type="EMBL" id="AE010299">
    <property type="protein sequence ID" value="AAM07506.1"/>
    <property type="molecule type" value="Genomic_DNA"/>
</dbReference>
<dbReference type="RefSeq" id="WP_011024046.1">
    <property type="nucleotide sequence ID" value="NC_003552.1"/>
</dbReference>
<dbReference type="SMR" id="Q8TIJ1"/>
<dbReference type="FunCoup" id="Q8TIJ1">
    <property type="interactions" value="88"/>
</dbReference>
<dbReference type="STRING" id="188937.MA_4158"/>
<dbReference type="EnsemblBacteria" id="AAM07506">
    <property type="protein sequence ID" value="AAM07506"/>
    <property type="gene ID" value="MA_4158"/>
</dbReference>
<dbReference type="GeneID" id="1476052"/>
<dbReference type="KEGG" id="mac:MA_4158"/>
<dbReference type="HOGENOM" id="CLU_008162_3_1_2"/>
<dbReference type="InParanoid" id="Q8TIJ1"/>
<dbReference type="OrthoDB" id="115235at2157"/>
<dbReference type="PhylomeDB" id="Q8TIJ1"/>
<dbReference type="Proteomes" id="UP000002487">
    <property type="component" value="Chromosome"/>
</dbReference>
<dbReference type="GO" id="GO:0005886">
    <property type="term" value="C:plasma membrane"/>
    <property type="evidence" value="ECO:0007669"/>
    <property type="project" value="UniProtKB-SubCell"/>
</dbReference>
<dbReference type="GO" id="GO:0033178">
    <property type="term" value="C:proton-transporting two-sector ATPase complex, catalytic domain"/>
    <property type="evidence" value="ECO:0007669"/>
    <property type="project" value="InterPro"/>
</dbReference>
<dbReference type="GO" id="GO:0005524">
    <property type="term" value="F:ATP binding"/>
    <property type="evidence" value="ECO:0007669"/>
    <property type="project" value="UniProtKB-UniRule"/>
</dbReference>
<dbReference type="GO" id="GO:0046933">
    <property type="term" value="F:proton-transporting ATP synthase activity, rotational mechanism"/>
    <property type="evidence" value="ECO:0007669"/>
    <property type="project" value="UniProtKB-UniRule"/>
</dbReference>
<dbReference type="GO" id="GO:0046961">
    <property type="term" value="F:proton-transporting ATPase activity, rotational mechanism"/>
    <property type="evidence" value="ECO:0000318"/>
    <property type="project" value="GO_Central"/>
</dbReference>
<dbReference type="GO" id="GO:0042777">
    <property type="term" value="P:proton motive force-driven plasma membrane ATP synthesis"/>
    <property type="evidence" value="ECO:0007669"/>
    <property type="project" value="UniProtKB-UniRule"/>
</dbReference>
<dbReference type="GO" id="GO:1902600">
    <property type="term" value="P:proton transmembrane transport"/>
    <property type="evidence" value="ECO:0000318"/>
    <property type="project" value="GO_Central"/>
</dbReference>
<dbReference type="CDD" id="cd18111">
    <property type="entry name" value="ATP-synt_V_A-type_alpha_C"/>
    <property type="match status" value="1"/>
</dbReference>
<dbReference type="CDD" id="cd18119">
    <property type="entry name" value="ATP-synt_V_A-type_alpha_N"/>
    <property type="match status" value="1"/>
</dbReference>
<dbReference type="CDD" id="cd01134">
    <property type="entry name" value="V_A-ATPase_A"/>
    <property type="match status" value="1"/>
</dbReference>
<dbReference type="FunFam" id="3.40.50.300:FF:000675">
    <property type="entry name" value="V-type ATP synthase alpha chain"/>
    <property type="match status" value="1"/>
</dbReference>
<dbReference type="FunFam" id="1.10.1140.10:FF:000002">
    <property type="entry name" value="V-type proton ATPase catalytic subunit A"/>
    <property type="match status" value="1"/>
</dbReference>
<dbReference type="FunFam" id="2.40.50.100:FF:000008">
    <property type="entry name" value="V-type proton ATPase catalytic subunit A"/>
    <property type="match status" value="1"/>
</dbReference>
<dbReference type="Gene3D" id="2.40.30.20">
    <property type="match status" value="1"/>
</dbReference>
<dbReference type="Gene3D" id="2.40.50.100">
    <property type="match status" value="1"/>
</dbReference>
<dbReference type="Gene3D" id="1.10.1140.10">
    <property type="entry name" value="Bovine Mitochondrial F1-atpase, Atp Synthase Beta Chain, Chain D, domain 3"/>
    <property type="match status" value="1"/>
</dbReference>
<dbReference type="Gene3D" id="3.40.50.300">
    <property type="entry name" value="P-loop containing nucleotide triphosphate hydrolases"/>
    <property type="match status" value="1"/>
</dbReference>
<dbReference type="HAMAP" id="MF_00309">
    <property type="entry name" value="ATP_synth_A_arch"/>
    <property type="match status" value="1"/>
</dbReference>
<dbReference type="InterPro" id="IPR055190">
    <property type="entry name" value="ATP-synt_VA_C"/>
</dbReference>
<dbReference type="InterPro" id="IPR031686">
    <property type="entry name" value="ATP-synth_a_Xtn"/>
</dbReference>
<dbReference type="InterPro" id="IPR023366">
    <property type="entry name" value="ATP_synth_asu-like_sf"/>
</dbReference>
<dbReference type="InterPro" id="IPR005726">
    <property type="entry name" value="ATP_synth_asu_arc"/>
</dbReference>
<dbReference type="InterPro" id="IPR020003">
    <property type="entry name" value="ATPase_a/bsu_AS"/>
</dbReference>
<dbReference type="InterPro" id="IPR004100">
    <property type="entry name" value="ATPase_F1/V1/A1_a/bsu_N"/>
</dbReference>
<dbReference type="InterPro" id="IPR036121">
    <property type="entry name" value="ATPase_F1/V1/A1_a/bsu_N_sf"/>
</dbReference>
<dbReference type="InterPro" id="IPR000194">
    <property type="entry name" value="ATPase_F1/V1/A1_a/bsu_nucl-bd"/>
</dbReference>
<dbReference type="InterPro" id="IPR024034">
    <property type="entry name" value="ATPase_F1/V1_b/a_C"/>
</dbReference>
<dbReference type="InterPro" id="IPR027417">
    <property type="entry name" value="P-loop_NTPase"/>
</dbReference>
<dbReference type="InterPro" id="IPR001763">
    <property type="entry name" value="Rhodanese-like_dom"/>
</dbReference>
<dbReference type="InterPro" id="IPR022878">
    <property type="entry name" value="V-ATPase_asu"/>
</dbReference>
<dbReference type="NCBIfam" id="TIGR01043">
    <property type="entry name" value="ATP_syn_A_arch"/>
    <property type="match status" value="1"/>
</dbReference>
<dbReference type="NCBIfam" id="NF003220">
    <property type="entry name" value="PRK04192.1"/>
    <property type="match status" value="1"/>
</dbReference>
<dbReference type="PANTHER" id="PTHR43607:SF1">
    <property type="entry name" value="H(+)-TRANSPORTING TWO-SECTOR ATPASE"/>
    <property type="match status" value="1"/>
</dbReference>
<dbReference type="PANTHER" id="PTHR43607">
    <property type="entry name" value="V-TYPE PROTON ATPASE CATALYTIC SUBUNIT A"/>
    <property type="match status" value="1"/>
</dbReference>
<dbReference type="Pfam" id="PF00006">
    <property type="entry name" value="ATP-synt_ab"/>
    <property type="match status" value="1"/>
</dbReference>
<dbReference type="Pfam" id="PF02874">
    <property type="entry name" value="ATP-synt_ab_N"/>
    <property type="match status" value="1"/>
</dbReference>
<dbReference type="Pfam" id="PF16886">
    <property type="entry name" value="ATP-synt_ab_Xtn"/>
    <property type="match status" value="1"/>
</dbReference>
<dbReference type="Pfam" id="PF22919">
    <property type="entry name" value="ATP-synt_VA_C"/>
    <property type="match status" value="1"/>
</dbReference>
<dbReference type="SUPFAM" id="SSF47917">
    <property type="entry name" value="C-terminal domain of alpha and beta subunits of F1 ATP synthase"/>
    <property type="match status" value="1"/>
</dbReference>
<dbReference type="SUPFAM" id="SSF50615">
    <property type="entry name" value="N-terminal domain of alpha and beta subunits of F1 ATP synthase"/>
    <property type="match status" value="1"/>
</dbReference>
<dbReference type="SUPFAM" id="SSF52540">
    <property type="entry name" value="P-loop containing nucleoside triphosphate hydrolases"/>
    <property type="match status" value="1"/>
</dbReference>
<dbReference type="PROSITE" id="PS00152">
    <property type="entry name" value="ATPASE_ALPHA_BETA"/>
    <property type="match status" value="1"/>
</dbReference>
<accession>Q8TIJ1</accession>
<reference key="1">
    <citation type="journal article" date="2002" name="Genome Res.">
        <title>The genome of Methanosarcina acetivorans reveals extensive metabolic and physiological diversity.</title>
        <authorList>
            <person name="Galagan J.E."/>
            <person name="Nusbaum C."/>
            <person name="Roy A."/>
            <person name="Endrizzi M.G."/>
            <person name="Macdonald P."/>
            <person name="FitzHugh W."/>
            <person name="Calvo S."/>
            <person name="Engels R."/>
            <person name="Smirnov S."/>
            <person name="Atnoor D."/>
            <person name="Brown A."/>
            <person name="Allen N."/>
            <person name="Naylor J."/>
            <person name="Stange-Thomann N."/>
            <person name="DeArellano K."/>
            <person name="Johnson R."/>
            <person name="Linton L."/>
            <person name="McEwan P."/>
            <person name="McKernan K."/>
            <person name="Talamas J."/>
            <person name="Tirrell A."/>
            <person name="Ye W."/>
            <person name="Zimmer A."/>
            <person name="Barber R.D."/>
            <person name="Cann I."/>
            <person name="Graham D.E."/>
            <person name="Grahame D.A."/>
            <person name="Guss A.M."/>
            <person name="Hedderich R."/>
            <person name="Ingram-Smith C."/>
            <person name="Kuettner H.C."/>
            <person name="Krzycki J.A."/>
            <person name="Leigh J.A."/>
            <person name="Li W."/>
            <person name="Liu J."/>
            <person name="Mukhopadhyay B."/>
            <person name="Reeve J.N."/>
            <person name="Smith K."/>
            <person name="Springer T.A."/>
            <person name="Umayam L.A."/>
            <person name="White O."/>
            <person name="White R.H."/>
            <person name="de Macario E.C."/>
            <person name="Ferry J.G."/>
            <person name="Jarrell K.F."/>
            <person name="Jing H."/>
            <person name="Macario A.J.L."/>
            <person name="Paulsen I.T."/>
            <person name="Pritchett M."/>
            <person name="Sowers K.R."/>
            <person name="Swanson R.V."/>
            <person name="Zinder S.H."/>
            <person name="Lander E."/>
            <person name="Metcalf W.W."/>
            <person name="Birren B."/>
        </authorList>
    </citation>
    <scope>NUCLEOTIDE SEQUENCE [LARGE SCALE GENOMIC DNA]</scope>
    <source>
        <strain>ATCC 35395 / DSM 2834 / JCM 12185 / C2A</strain>
    </source>
</reference>
<name>AATA_METAC</name>
<protein>
    <recommendedName>
        <fullName evidence="1">A-type ATP synthase subunit A</fullName>
        <ecNumber evidence="1">7.1.2.2</ecNumber>
    </recommendedName>
</protein>
<sequence length="578" mass="63721">MEVKGEIYRVAGPVVTAIGLDAKMYDLCKVGNEGLMGEVIQIVGGKTIIQVYEETGGVKPGEPCVTTGMSLAVELGPGLLSSIYDGVQRPLHVLLEKTGGFIQRGVTADGLDHEKLWEFKPVAKKGDFVKGGEVLGVVQETVNLEHKVMMPPDKSGTVADIKSGNFTVLETVCTLTDGTELQMMHRWPVRRPRPVKRKLTPEKPLVTGQRILDGLFPVAKGGTAAIPGPFGSGKTVTQQQLSKWSDTEIVVYVGCGERGNEMADVLWDFPELEDPQTGRPLMERTILVANTSNMPVAAREASVYTGMTLAEYFRDMGYNVSLMADSTSRWAEAMREISSRLEEMPGEEGYPAYLSARLAEFYERAGVAETLCGEKGSITAIGAVSPPGGDFSEPVTQNTLRIVKVFWALDAKLSQRRHFPAINWLNSYSLYKEDLNDWFTENVAPDYVAMREKAMDMLQTESELQEIVQLVGSDALPEEQQLLLEITRMIREIYLQQNAFHPIDTYSPFAKQYKIMQAIMKYGDAAMDALKSGVPASEIIKMESKDELPKVKFEEDFDGSLSAVLAKMDKEFAALGGR</sequence>
<keyword id="KW-0066">ATP synthesis</keyword>
<keyword id="KW-0067">ATP-binding</keyword>
<keyword id="KW-1003">Cell membrane</keyword>
<keyword id="KW-0375">Hydrogen ion transport</keyword>
<keyword id="KW-0406">Ion transport</keyword>
<keyword id="KW-0472">Membrane</keyword>
<keyword id="KW-0547">Nucleotide-binding</keyword>
<keyword id="KW-1185">Reference proteome</keyword>
<keyword id="KW-1278">Translocase</keyword>
<keyword id="KW-0813">Transport</keyword>
<proteinExistence type="inferred from homology"/>
<gene>
    <name evidence="1" type="primary">atpA</name>
    <name type="ordered locus">MA_4158</name>
</gene>
<comment type="function">
    <text evidence="1">Component of the A-type ATP synthase that produces ATP from ADP in the presence of a proton gradient across the membrane. The A chain is the catalytic subunit.</text>
</comment>
<comment type="catalytic activity">
    <reaction evidence="1">
        <text>ATP + H2O + 4 H(+)(in) = ADP + phosphate + 5 H(+)(out)</text>
        <dbReference type="Rhea" id="RHEA:57720"/>
        <dbReference type="ChEBI" id="CHEBI:15377"/>
        <dbReference type="ChEBI" id="CHEBI:15378"/>
        <dbReference type="ChEBI" id="CHEBI:30616"/>
        <dbReference type="ChEBI" id="CHEBI:43474"/>
        <dbReference type="ChEBI" id="CHEBI:456216"/>
        <dbReference type="EC" id="7.1.2.2"/>
    </reaction>
</comment>
<comment type="subunit">
    <text evidence="1">Has multiple subunits with at least A(3), B(3), C, D, E, F, H, I and proteolipid K(x).</text>
</comment>
<comment type="subcellular location">
    <subcellularLocation>
        <location evidence="1">Cell membrane</location>
        <topology evidence="1">Peripheral membrane protein</topology>
    </subcellularLocation>
</comment>
<comment type="similarity">
    <text evidence="1">Belongs to the ATPase alpha/beta chains family.</text>
</comment>
<evidence type="ECO:0000255" key="1">
    <source>
        <dbReference type="HAMAP-Rule" id="MF_00309"/>
    </source>
</evidence>
<feature type="chain" id="PRO_0000144596" description="A-type ATP synthase subunit A">
    <location>
        <begin position="1"/>
        <end position="578"/>
    </location>
</feature>
<feature type="binding site" evidence="1">
    <location>
        <begin position="228"/>
        <end position="235"/>
    </location>
    <ligand>
        <name>ATP</name>
        <dbReference type="ChEBI" id="CHEBI:30616"/>
    </ligand>
</feature>